<keyword id="KW-0067">ATP-binding</keyword>
<keyword id="KW-0414">Isoprene biosynthesis</keyword>
<keyword id="KW-0418">Kinase</keyword>
<keyword id="KW-0547">Nucleotide-binding</keyword>
<keyword id="KW-1185">Reference proteome</keyword>
<keyword id="KW-0808">Transferase</keyword>
<gene>
    <name evidence="1" type="primary">ispE</name>
    <name type="ordered locus">CBO0121</name>
    <name type="ordered locus">CLC_0169</name>
</gene>
<accession>A5HY17</accession>
<accession>A7G037</accession>
<organism>
    <name type="scientific">Clostridium botulinum (strain Hall / ATCC 3502 / NCTC 13319 / Type A)</name>
    <dbReference type="NCBI Taxonomy" id="441771"/>
    <lineage>
        <taxon>Bacteria</taxon>
        <taxon>Bacillati</taxon>
        <taxon>Bacillota</taxon>
        <taxon>Clostridia</taxon>
        <taxon>Eubacteriales</taxon>
        <taxon>Clostridiaceae</taxon>
        <taxon>Clostridium</taxon>
    </lineage>
</organism>
<dbReference type="EC" id="2.7.1.148" evidence="1"/>
<dbReference type="EMBL" id="CP000727">
    <property type="protein sequence ID" value="ABS38191.1"/>
    <property type="molecule type" value="Genomic_DNA"/>
</dbReference>
<dbReference type="EMBL" id="AM412317">
    <property type="protein sequence ID" value="CAL81676.1"/>
    <property type="molecule type" value="Genomic_DNA"/>
</dbReference>
<dbReference type="RefSeq" id="WP_011947969.1">
    <property type="nucleotide sequence ID" value="NC_009698.1"/>
</dbReference>
<dbReference type="RefSeq" id="YP_001252668.1">
    <property type="nucleotide sequence ID" value="NC_009495.1"/>
</dbReference>
<dbReference type="RefSeq" id="YP_001386080.1">
    <property type="nucleotide sequence ID" value="NC_009698.1"/>
</dbReference>
<dbReference type="SMR" id="A5HY17"/>
<dbReference type="GeneID" id="5184376"/>
<dbReference type="KEGG" id="cbh:CLC_0169"/>
<dbReference type="KEGG" id="cbo:CBO0121"/>
<dbReference type="PATRIC" id="fig|413999.7.peg.121"/>
<dbReference type="HOGENOM" id="CLU_053057_1_1_9"/>
<dbReference type="UniPathway" id="UPA00056">
    <property type="reaction ID" value="UER00094"/>
</dbReference>
<dbReference type="PRO" id="PR:A5HY17"/>
<dbReference type="Proteomes" id="UP000001986">
    <property type="component" value="Chromosome"/>
</dbReference>
<dbReference type="GO" id="GO:0050515">
    <property type="term" value="F:4-(cytidine 5'-diphospho)-2-C-methyl-D-erythritol kinase activity"/>
    <property type="evidence" value="ECO:0000318"/>
    <property type="project" value="GO_Central"/>
</dbReference>
<dbReference type="GO" id="GO:0005524">
    <property type="term" value="F:ATP binding"/>
    <property type="evidence" value="ECO:0007669"/>
    <property type="project" value="UniProtKB-UniRule"/>
</dbReference>
<dbReference type="GO" id="GO:0019288">
    <property type="term" value="P:isopentenyl diphosphate biosynthetic process, methylerythritol 4-phosphate pathway"/>
    <property type="evidence" value="ECO:0007669"/>
    <property type="project" value="UniProtKB-UniRule"/>
</dbReference>
<dbReference type="GO" id="GO:0016114">
    <property type="term" value="P:terpenoid biosynthetic process"/>
    <property type="evidence" value="ECO:0007669"/>
    <property type="project" value="InterPro"/>
</dbReference>
<dbReference type="FunFam" id="3.30.230.10:FF:000029">
    <property type="entry name" value="4-diphosphocytidyl-2-C-methyl-D-erythritol kinase"/>
    <property type="match status" value="1"/>
</dbReference>
<dbReference type="Gene3D" id="3.30.230.10">
    <property type="match status" value="1"/>
</dbReference>
<dbReference type="Gene3D" id="3.30.70.890">
    <property type="entry name" value="GHMP kinase, C-terminal domain"/>
    <property type="match status" value="1"/>
</dbReference>
<dbReference type="HAMAP" id="MF_00061">
    <property type="entry name" value="IspE"/>
    <property type="match status" value="1"/>
</dbReference>
<dbReference type="InterPro" id="IPR013750">
    <property type="entry name" value="GHMP_kinase_C_dom"/>
</dbReference>
<dbReference type="InterPro" id="IPR036554">
    <property type="entry name" value="GHMP_kinase_C_sf"/>
</dbReference>
<dbReference type="InterPro" id="IPR006204">
    <property type="entry name" value="GHMP_kinase_N_dom"/>
</dbReference>
<dbReference type="InterPro" id="IPR004424">
    <property type="entry name" value="IspE"/>
</dbReference>
<dbReference type="InterPro" id="IPR020568">
    <property type="entry name" value="Ribosomal_Su5_D2-typ_SF"/>
</dbReference>
<dbReference type="InterPro" id="IPR014721">
    <property type="entry name" value="Ribsml_uS5_D2-typ_fold_subgr"/>
</dbReference>
<dbReference type="NCBIfam" id="TIGR00154">
    <property type="entry name" value="ispE"/>
    <property type="match status" value="1"/>
</dbReference>
<dbReference type="PANTHER" id="PTHR43527">
    <property type="entry name" value="4-DIPHOSPHOCYTIDYL-2-C-METHYL-D-ERYTHRITOL KINASE, CHLOROPLASTIC"/>
    <property type="match status" value="1"/>
</dbReference>
<dbReference type="PANTHER" id="PTHR43527:SF2">
    <property type="entry name" value="4-DIPHOSPHOCYTIDYL-2-C-METHYL-D-ERYTHRITOL KINASE, CHLOROPLASTIC"/>
    <property type="match status" value="1"/>
</dbReference>
<dbReference type="Pfam" id="PF08544">
    <property type="entry name" value="GHMP_kinases_C"/>
    <property type="match status" value="1"/>
</dbReference>
<dbReference type="Pfam" id="PF00288">
    <property type="entry name" value="GHMP_kinases_N"/>
    <property type="match status" value="1"/>
</dbReference>
<dbReference type="PIRSF" id="PIRSF010376">
    <property type="entry name" value="IspE"/>
    <property type="match status" value="1"/>
</dbReference>
<dbReference type="SUPFAM" id="SSF55060">
    <property type="entry name" value="GHMP Kinase, C-terminal domain"/>
    <property type="match status" value="1"/>
</dbReference>
<dbReference type="SUPFAM" id="SSF54211">
    <property type="entry name" value="Ribosomal protein S5 domain 2-like"/>
    <property type="match status" value="1"/>
</dbReference>
<feature type="chain" id="PRO_1000007833" description="4-diphosphocytidyl-2-C-methyl-D-erythritol kinase">
    <location>
        <begin position="1"/>
        <end position="280"/>
    </location>
</feature>
<feature type="active site" evidence="1">
    <location>
        <position position="8"/>
    </location>
</feature>
<feature type="active site" evidence="1">
    <location>
        <position position="133"/>
    </location>
</feature>
<feature type="binding site" evidence="1">
    <location>
        <begin position="91"/>
        <end position="101"/>
    </location>
    <ligand>
        <name>ATP</name>
        <dbReference type="ChEBI" id="CHEBI:30616"/>
    </ligand>
</feature>
<evidence type="ECO:0000255" key="1">
    <source>
        <dbReference type="HAMAP-Rule" id="MF_00061"/>
    </source>
</evidence>
<reference key="1">
    <citation type="journal article" date="2007" name="Genome Res.">
        <title>Genome sequence of a proteolytic (Group I) Clostridium botulinum strain Hall A and comparative analysis of the clostridial genomes.</title>
        <authorList>
            <person name="Sebaihia M."/>
            <person name="Peck M.W."/>
            <person name="Minton N.P."/>
            <person name="Thomson N.R."/>
            <person name="Holden M.T.G."/>
            <person name="Mitchell W.J."/>
            <person name="Carter A.T."/>
            <person name="Bentley S.D."/>
            <person name="Mason D.R."/>
            <person name="Crossman L."/>
            <person name="Paul C.J."/>
            <person name="Ivens A."/>
            <person name="Wells-Bennik M.H.J."/>
            <person name="Davis I.J."/>
            <person name="Cerdeno-Tarraga A.M."/>
            <person name="Churcher C."/>
            <person name="Quail M.A."/>
            <person name="Chillingworth T."/>
            <person name="Feltwell T."/>
            <person name="Fraser A."/>
            <person name="Goodhead I."/>
            <person name="Hance Z."/>
            <person name="Jagels K."/>
            <person name="Larke N."/>
            <person name="Maddison M."/>
            <person name="Moule S."/>
            <person name="Mungall K."/>
            <person name="Norbertczak H."/>
            <person name="Rabbinowitsch E."/>
            <person name="Sanders M."/>
            <person name="Simmonds M."/>
            <person name="White B."/>
            <person name="Whithead S."/>
            <person name="Parkhill J."/>
        </authorList>
    </citation>
    <scope>NUCLEOTIDE SEQUENCE [LARGE SCALE GENOMIC DNA]</scope>
    <source>
        <strain>Hall / ATCC 3502 / NCTC 13319 / Type A</strain>
    </source>
</reference>
<reference key="2">
    <citation type="journal article" date="2007" name="PLoS ONE">
        <title>Analysis of the neurotoxin complex genes in Clostridium botulinum A1-A4 and B1 strains: BoNT/A3, /Ba4 and /B1 clusters are located within plasmids.</title>
        <authorList>
            <person name="Smith T.J."/>
            <person name="Hill K.K."/>
            <person name="Foley B.T."/>
            <person name="Detter J.C."/>
            <person name="Munk A.C."/>
            <person name="Bruce D.C."/>
            <person name="Doggett N.A."/>
            <person name="Smith L.A."/>
            <person name="Marks J.D."/>
            <person name="Xie G."/>
            <person name="Brettin T.S."/>
        </authorList>
    </citation>
    <scope>NUCLEOTIDE SEQUENCE [LARGE SCALE GENOMIC DNA]</scope>
    <source>
        <strain>Hall / ATCC 3502 / NCTC 13319 / Type A</strain>
    </source>
</reference>
<proteinExistence type="inferred from homology"/>
<sequence length="280" mass="31520">MLSKAHAKINLSLDVIGKRKDGYHLLKMLMQTIDLYDLIEIKKIKKDIIIDCDREYIPKDRRNLAYKAATLFLDRYNIDSGVRINITKNIPVAAGLAGGSTDAATVLKIMRDIFEPDISNEELKEIALDIGADVPFCIEGGTALCEGIGEKITPIKNFKNHILVLVKPNFGLSTKDVYNNLKVEKIYIHPNTTKLIQSIEEDNLKSVARNMRNVLENVTLRKYKALNSIKSNFIELGALGSMMSGSGPSVFGLFDDMLKAQICYDNMREKYKEVFITRTI</sequence>
<protein>
    <recommendedName>
        <fullName evidence="1">4-diphosphocytidyl-2-C-methyl-D-erythritol kinase</fullName>
        <shortName evidence="1">CMK</shortName>
        <ecNumber evidence="1">2.7.1.148</ecNumber>
    </recommendedName>
    <alternativeName>
        <fullName evidence="1">4-(cytidine-5'-diphospho)-2-C-methyl-D-erythritol kinase</fullName>
    </alternativeName>
</protein>
<comment type="function">
    <text evidence="1">Catalyzes the phosphorylation of the position 2 hydroxy group of 4-diphosphocytidyl-2C-methyl-D-erythritol.</text>
</comment>
<comment type="catalytic activity">
    <reaction evidence="1">
        <text>4-CDP-2-C-methyl-D-erythritol + ATP = 4-CDP-2-C-methyl-D-erythritol 2-phosphate + ADP + H(+)</text>
        <dbReference type="Rhea" id="RHEA:18437"/>
        <dbReference type="ChEBI" id="CHEBI:15378"/>
        <dbReference type="ChEBI" id="CHEBI:30616"/>
        <dbReference type="ChEBI" id="CHEBI:57823"/>
        <dbReference type="ChEBI" id="CHEBI:57919"/>
        <dbReference type="ChEBI" id="CHEBI:456216"/>
        <dbReference type="EC" id="2.7.1.148"/>
    </reaction>
</comment>
<comment type="pathway">
    <text evidence="1">Isoprenoid biosynthesis; isopentenyl diphosphate biosynthesis via DXP pathway; isopentenyl diphosphate from 1-deoxy-D-xylulose 5-phosphate: step 3/6.</text>
</comment>
<comment type="similarity">
    <text evidence="1">Belongs to the GHMP kinase family. IspE subfamily.</text>
</comment>
<name>ISPE_CLOBH</name>